<comment type="function">
    <text evidence="1">Nucleoside triphosphate pyrophosphatase that hydrolyzes dTTP and UTP. May have a dual role in cell division arrest and in preventing the incorporation of modified nucleotides into cellular nucleic acids.</text>
</comment>
<comment type="catalytic activity">
    <reaction evidence="1">
        <text>dTTP + H2O = dTMP + diphosphate + H(+)</text>
        <dbReference type="Rhea" id="RHEA:28534"/>
        <dbReference type="ChEBI" id="CHEBI:15377"/>
        <dbReference type="ChEBI" id="CHEBI:15378"/>
        <dbReference type="ChEBI" id="CHEBI:33019"/>
        <dbReference type="ChEBI" id="CHEBI:37568"/>
        <dbReference type="ChEBI" id="CHEBI:63528"/>
        <dbReference type="EC" id="3.6.1.9"/>
    </reaction>
</comment>
<comment type="catalytic activity">
    <reaction evidence="1">
        <text>UTP + H2O = UMP + diphosphate + H(+)</text>
        <dbReference type="Rhea" id="RHEA:29395"/>
        <dbReference type="ChEBI" id="CHEBI:15377"/>
        <dbReference type="ChEBI" id="CHEBI:15378"/>
        <dbReference type="ChEBI" id="CHEBI:33019"/>
        <dbReference type="ChEBI" id="CHEBI:46398"/>
        <dbReference type="ChEBI" id="CHEBI:57865"/>
        <dbReference type="EC" id="3.6.1.9"/>
    </reaction>
</comment>
<comment type="cofactor">
    <cofactor evidence="1">
        <name>a divalent metal cation</name>
        <dbReference type="ChEBI" id="CHEBI:60240"/>
    </cofactor>
</comment>
<comment type="subcellular location">
    <subcellularLocation>
        <location evidence="1">Cytoplasm</location>
    </subcellularLocation>
</comment>
<comment type="similarity">
    <text evidence="1">Belongs to the Maf family. YhdE subfamily.</text>
</comment>
<name>NTPPA_LATSS</name>
<accession>Q38YR2</accession>
<proteinExistence type="inferred from homology"/>
<reference key="1">
    <citation type="journal article" date="2005" name="Nat. Biotechnol.">
        <title>The complete genome sequence of the meat-borne lactic acid bacterium Lactobacillus sakei 23K.</title>
        <authorList>
            <person name="Chaillou S."/>
            <person name="Champomier-Verges M.-C."/>
            <person name="Cornet M."/>
            <person name="Crutz-Le Coq A.-M."/>
            <person name="Dudez A.-M."/>
            <person name="Martin V."/>
            <person name="Beaufils S."/>
            <person name="Darbon-Rongere E."/>
            <person name="Bossy R."/>
            <person name="Loux V."/>
            <person name="Zagorec M."/>
        </authorList>
    </citation>
    <scope>NUCLEOTIDE SEQUENCE [LARGE SCALE GENOMIC DNA]</scope>
    <source>
        <strain>23K</strain>
    </source>
</reference>
<dbReference type="EC" id="3.6.1.9" evidence="1"/>
<dbReference type="EMBL" id="CR936503">
    <property type="protein sequence ID" value="CAI54665.1"/>
    <property type="molecule type" value="Genomic_DNA"/>
</dbReference>
<dbReference type="RefSeq" id="WP_011374073.1">
    <property type="nucleotide sequence ID" value="NC_007576.1"/>
</dbReference>
<dbReference type="SMR" id="Q38YR2"/>
<dbReference type="STRING" id="314315.LCA_0364"/>
<dbReference type="KEGG" id="lsa:LCA_0364"/>
<dbReference type="eggNOG" id="COG0424">
    <property type="taxonomic scope" value="Bacteria"/>
</dbReference>
<dbReference type="HOGENOM" id="CLU_040416_0_0_9"/>
<dbReference type="OrthoDB" id="9807767at2"/>
<dbReference type="Proteomes" id="UP000002707">
    <property type="component" value="Chromosome"/>
</dbReference>
<dbReference type="GO" id="GO:0005737">
    <property type="term" value="C:cytoplasm"/>
    <property type="evidence" value="ECO:0007669"/>
    <property type="project" value="UniProtKB-SubCell"/>
</dbReference>
<dbReference type="GO" id="GO:0036218">
    <property type="term" value="F:dTTP diphosphatase activity"/>
    <property type="evidence" value="ECO:0007669"/>
    <property type="project" value="RHEA"/>
</dbReference>
<dbReference type="GO" id="GO:0036221">
    <property type="term" value="F:UTP diphosphatase activity"/>
    <property type="evidence" value="ECO:0007669"/>
    <property type="project" value="RHEA"/>
</dbReference>
<dbReference type="GO" id="GO:0009117">
    <property type="term" value="P:nucleotide metabolic process"/>
    <property type="evidence" value="ECO:0007669"/>
    <property type="project" value="UniProtKB-KW"/>
</dbReference>
<dbReference type="CDD" id="cd00555">
    <property type="entry name" value="Maf"/>
    <property type="match status" value="1"/>
</dbReference>
<dbReference type="Gene3D" id="3.90.950.10">
    <property type="match status" value="1"/>
</dbReference>
<dbReference type="HAMAP" id="MF_00528">
    <property type="entry name" value="Maf"/>
    <property type="match status" value="1"/>
</dbReference>
<dbReference type="InterPro" id="IPR029001">
    <property type="entry name" value="ITPase-like_fam"/>
</dbReference>
<dbReference type="InterPro" id="IPR003697">
    <property type="entry name" value="Maf-like"/>
</dbReference>
<dbReference type="NCBIfam" id="TIGR00172">
    <property type="entry name" value="maf"/>
    <property type="match status" value="1"/>
</dbReference>
<dbReference type="PANTHER" id="PTHR43213">
    <property type="entry name" value="BIFUNCTIONAL DTTP/UTP PYROPHOSPHATASE/METHYLTRANSFERASE PROTEIN-RELATED"/>
    <property type="match status" value="1"/>
</dbReference>
<dbReference type="PANTHER" id="PTHR43213:SF5">
    <property type="entry name" value="BIFUNCTIONAL DTTP_UTP PYROPHOSPHATASE_METHYLTRANSFERASE PROTEIN-RELATED"/>
    <property type="match status" value="1"/>
</dbReference>
<dbReference type="Pfam" id="PF02545">
    <property type="entry name" value="Maf"/>
    <property type="match status" value="1"/>
</dbReference>
<dbReference type="PIRSF" id="PIRSF006305">
    <property type="entry name" value="Maf"/>
    <property type="match status" value="1"/>
</dbReference>
<dbReference type="SUPFAM" id="SSF52972">
    <property type="entry name" value="ITPase-like"/>
    <property type="match status" value="1"/>
</dbReference>
<keyword id="KW-0963">Cytoplasm</keyword>
<keyword id="KW-0378">Hydrolase</keyword>
<keyword id="KW-0546">Nucleotide metabolism</keyword>
<keyword id="KW-1185">Reference proteome</keyword>
<protein>
    <recommendedName>
        <fullName evidence="1">dTTP/UTP pyrophosphatase</fullName>
        <shortName evidence="1">dTTPase/UTPase</shortName>
        <ecNumber evidence="1">3.6.1.9</ecNumber>
    </recommendedName>
    <alternativeName>
        <fullName evidence="1">Nucleoside triphosphate pyrophosphatase</fullName>
    </alternativeName>
    <alternativeName>
        <fullName evidence="1">Nucleotide pyrophosphatase</fullName>
        <shortName evidence="1">Nucleotide PPase</shortName>
    </alternativeName>
</protein>
<feature type="chain" id="PRO_0000267327" description="dTTP/UTP pyrophosphatase">
    <location>
        <begin position="1"/>
        <end position="181"/>
    </location>
</feature>
<feature type="active site" description="Proton acceptor" evidence="1">
    <location>
        <position position="67"/>
    </location>
</feature>
<feature type="site" description="Important for substrate specificity" evidence="1">
    <location>
        <position position="10"/>
    </location>
</feature>
<feature type="site" description="Important for substrate specificity" evidence="1">
    <location>
        <position position="68"/>
    </location>
</feature>
<feature type="site" description="Important for substrate specificity" evidence="1">
    <location>
        <position position="150"/>
    </location>
</feature>
<organism>
    <name type="scientific">Latilactobacillus sakei subsp. sakei (strain 23K)</name>
    <name type="common">Lactobacillus sakei subsp. sakei</name>
    <dbReference type="NCBI Taxonomy" id="314315"/>
    <lineage>
        <taxon>Bacteria</taxon>
        <taxon>Bacillati</taxon>
        <taxon>Bacillota</taxon>
        <taxon>Bacilli</taxon>
        <taxon>Lactobacillales</taxon>
        <taxon>Lactobacillaceae</taxon>
        <taxon>Latilactobacillus</taxon>
    </lineage>
</organism>
<evidence type="ECO:0000255" key="1">
    <source>
        <dbReference type="HAMAP-Rule" id="MF_00528"/>
    </source>
</evidence>
<sequence length="181" mass="20092">MFILASQSPRRQALLKRVVNDFEVQPAQIDEHETPLTAPGDYVQTLAQRKGEAVAVQYPTATILAADTAISFQGTLYGKPKDRQDAYEMLRQLSGQTHQVYTGLWLMKDGLVQQKVVQTDVTFWHLSTAEIEQYLDQNEYADKAGAYGIQGAGALLINKVNGDFYNVVGLPVSTVARMLQN</sequence>
<gene>
    <name type="ordered locus">LCA_0364</name>
</gene>